<reference key="1">
    <citation type="journal article" date="2001" name="Nature">
        <title>Complete genome sequence of a multiple drug resistant Salmonella enterica serovar Typhi CT18.</title>
        <authorList>
            <person name="Parkhill J."/>
            <person name="Dougan G."/>
            <person name="James K.D."/>
            <person name="Thomson N.R."/>
            <person name="Pickard D."/>
            <person name="Wain J."/>
            <person name="Churcher C.M."/>
            <person name="Mungall K.L."/>
            <person name="Bentley S.D."/>
            <person name="Holden M.T.G."/>
            <person name="Sebaihia M."/>
            <person name="Baker S."/>
            <person name="Basham D."/>
            <person name="Brooks K."/>
            <person name="Chillingworth T."/>
            <person name="Connerton P."/>
            <person name="Cronin A."/>
            <person name="Davis P."/>
            <person name="Davies R.M."/>
            <person name="Dowd L."/>
            <person name="White N."/>
            <person name="Farrar J."/>
            <person name="Feltwell T."/>
            <person name="Hamlin N."/>
            <person name="Haque A."/>
            <person name="Hien T.T."/>
            <person name="Holroyd S."/>
            <person name="Jagels K."/>
            <person name="Krogh A."/>
            <person name="Larsen T.S."/>
            <person name="Leather S."/>
            <person name="Moule S."/>
            <person name="O'Gaora P."/>
            <person name="Parry C."/>
            <person name="Quail M.A."/>
            <person name="Rutherford K.M."/>
            <person name="Simmonds M."/>
            <person name="Skelton J."/>
            <person name="Stevens K."/>
            <person name="Whitehead S."/>
            <person name="Barrell B.G."/>
        </authorList>
    </citation>
    <scope>NUCLEOTIDE SEQUENCE [LARGE SCALE GENOMIC DNA]</scope>
    <source>
        <strain>CT18</strain>
    </source>
</reference>
<reference key="2">
    <citation type="journal article" date="2003" name="J. Bacteriol.">
        <title>Comparative genomics of Salmonella enterica serovar Typhi strains Ty2 and CT18.</title>
        <authorList>
            <person name="Deng W."/>
            <person name="Liou S.-R."/>
            <person name="Plunkett G. III"/>
            <person name="Mayhew G.F."/>
            <person name="Rose D.J."/>
            <person name="Burland V."/>
            <person name="Kodoyianni V."/>
            <person name="Schwartz D.C."/>
            <person name="Blattner F.R."/>
        </authorList>
    </citation>
    <scope>NUCLEOTIDE SEQUENCE [LARGE SCALE GENOMIC DNA]</scope>
    <source>
        <strain>ATCC 700931 / Ty2</strain>
    </source>
</reference>
<evidence type="ECO:0000250" key="1"/>
<evidence type="ECO:0000255" key="2">
    <source>
        <dbReference type="HAMAP-Rule" id="MF_00315"/>
    </source>
</evidence>
<comment type="function">
    <text evidence="2">Catalyzes the acyloin condensation reaction between C atoms 2 and 3 of pyruvate and glyceraldehyde 3-phosphate to yield 1-deoxy-D-xylulose-5-phosphate (DXP).</text>
</comment>
<comment type="catalytic activity">
    <reaction evidence="2">
        <text>D-glyceraldehyde 3-phosphate + pyruvate + H(+) = 1-deoxy-D-xylulose 5-phosphate + CO2</text>
        <dbReference type="Rhea" id="RHEA:12605"/>
        <dbReference type="ChEBI" id="CHEBI:15361"/>
        <dbReference type="ChEBI" id="CHEBI:15378"/>
        <dbReference type="ChEBI" id="CHEBI:16526"/>
        <dbReference type="ChEBI" id="CHEBI:57792"/>
        <dbReference type="ChEBI" id="CHEBI:59776"/>
        <dbReference type="EC" id="2.2.1.7"/>
    </reaction>
</comment>
<comment type="cofactor">
    <cofactor evidence="2">
        <name>Mg(2+)</name>
        <dbReference type="ChEBI" id="CHEBI:18420"/>
    </cofactor>
    <text evidence="2">Binds 1 Mg(2+) ion per subunit.</text>
</comment>
<comment type="cofactor">
    <cofactor evidence="2">
        <name>thiamine diphosphate</name>
        <dbReference type="ChEBI" id="CHEBI:58937"/>
    </cofactor>
    <text evidence="2">Binds 1 thiamine pyrophosphate per subunit.</text>
</comment>
<comment type="pathway">
    <text evidence="2">Metabolic intermediate biosynthesis; 1-deoxy-D-xylulose 5-phosphate biosynthesis; 1-deoxy-D-xylulose 5-phosphate from D-glyceraldehyde 3-phosphate and pyruvate: step 1/1.</text>
</comment>
<comment type="subunit">
    <text evidence="2">Homodimer.</text>
</comment>
<comment type="similarity">
    <text evidence="2">Belongs to the transketolase family. DXPS subfamily.</text>
</comment>
<name>DXS_SALTI</name>
<organism>
    <name type="scientific">Salmonella typhi</name>
    <dbReference type="NCBI Taxonomy" id="90370"/>
    <lineage>
        <taxon>Bacteria</taxon>
        <taxon>Pseudomonadati</taxon>
        <taxon>Pseudomonadota</taxon>
        <taxon>Gammaproteobacteria</taxon>
        <taxon>Enterobacterales</taxon>
        <taxon>Enterobacteriaceae</taxon>
        <taxon>Salmonella</taxon>
    </lineage>
</organism>
<keyword id="KW-0414">Isoprene biosynthesis</keyword>
<keyword id="KW-0460">Magnesium</keyword>
<keyword id="KW-0479">Metal-binding</keyword>
<keyword id="KW-0784">Thiamine biosynthesis</keyword>
<keyword id="KW-0786">Thiamine pyrophosphate</keyword>
<keyword id="KW-0808">Transferase</keyword>
<sequence>MSFDIAKYPTLALVDSTQELRLLPKESLPKLCDELRRYLLDSVSRSSGHFASGLGTVELTVALHYVYNTPFDQLIWDVGHQAYPHKILTGRRDKIGTIRQKGGLHPFPWRGESEYDVLSVGHSSTSISAGIGIAVAAEKEGKDRRTVCVIGDGAITAGMAFEAMNHAGDIRPDMLVILNDNEMSISENVGALNNHLARLLSGKLYSSLREGGKKVFSGVPPIKELLKRTEEHIKGMVVPGTLFEELGFNYIGPVDGHDVMGLISTLKNMRDLKGPQFLHIMTKKGRGYEPAEKDPITFHAVPKFDPSSGCLPKSSGGLPGYSKIFGDWLCETAAKDSKLMAITPAMREGSGMVEFSRKFPDRYFDVAIAEQHAVTFAAGLAIGGYKPVVAIYSTFLQRAYDQVIHDVAIQKLPVMFAIDRAGIVGADGQTHQGAFDLSYLRCIPDMVIMTPSDENECRQMLFTGYHYNDGPTAVRYPRGNAQGVALTPLEKLPIGKGLVKRHGEKLAILNFGTLMPEAAKVAEALNATLVDMRFVKPLDDTLILEMAAQHDALVTLEENAIMGGAGSGVNEVLMAHRKPVPVLNIGLPDFFIPQGTQEEARAELGLDAAGIEAKIKAWLA</sequence>
<protein>
    <recommendedName>
        <fullName evidence="2">1-deoxy-D-xylulose-5-phosphate synthase</fullName>
        <ecNumber evidence="2">2.2.1.7</ecNumber>
    </recommendedName>
    <alternativeName>
        <fullName evidence="2">1-deoxyxylulose-5-phosphate synthase</fullName>
        <shortName evidence="2">DXP synthase</shortName>
        <shortName evidence="2">DXPS</shortName>
    </alternativeName>
</protein>
<proteinExistence type="inferred from homology"/>
<gene>
    <name evidence="2" type="primary">dxs</name>
    <name type="ordered locus">STY0461</name>
    <name type="ordered locus">t2441</name>
</gene>
<dbReference type="EC" id="2.2.1.7" evidence="2"/>
<dbReference type="EMBL" id="AL513382">
    <property type="protein sequence ID" value="CAD08878.1"/>
    <property type="molecule type" value="Genomic_DNA"/>
</dbReference>
<dbReference type="EMBL" id="AE014613">
    <property type="protein sequence ID" value="AAO70031.1"/>
    <property type="molecule type" value="Genomic_DNA"/>
</dbReference>
<dbReference type="RefSeq" id="NP_455016.1">
    <property type="nucleotide sequence ID" value="NC_003198.1"/>
</dbReference>
<dbReference type="RefSeq" id="WP_000006791.1">
    <property type="nucleotide sequence ID" value="NZ_WSUR01000026.1"/>
</dbReference>
<dbReference type="SMR" id="Q8Z8X3"/>
<dbReference type="STRING" id="220341.gene:17584483"/>
<dbReference type="KEGG" id="stt:t2441"/>
<dbReference type="KEGG" id="sty:STY0461"/>
<dbReference type="PATRIC" id="fig|220341.7.peg.462"/>
<dbReference type="eggNOG" id="COG1154">
    <property type="taxonomic scope" value="Bacteria"/>
</dbReference>
<dbReference type="HOGENOM" id="CLU_009227_1_4_6"/>
<dbReference type="OMA" id="QVGYHAQ"/>
<dbReference type="OrthoDB" id="9803371at2"/>
<dbReference type="UniPathway" id="UPA00064">
    <property type="reaction ID" value="UER00091"/>
</dbReference>
<dbReference type="Proteomes" id="UP000000541">
    <property type="component" value="Chromosome"/>
</dbReference>
<dbReference type="Proteomes" id="UP000002670">
    <property type="component" value="Chromosome"/>
</dbReference>
<dbReference type="GO" id="GO:0005829">
    <property type="term" value="C:cytosol"/>
    <property type="evidence" value="ECO:0007669"/>
    <property type="project" value="TreeGrafter"/>
</dbReference>
<dbReference type="GO" id="GO:0008661">
    <property type="term" value="F:1-deoxy-D-xylulose-5-phosphate synthase activity"/>
    <property type="evidence" value="ECO:0007669"/>
    <property type="project" value="UniProtKB-UniRule"/>
</dbReference>
<dbReference type="GO" id="GO:0000287">
    <property type="term" value="F:magnesium ion binding"/>
    <property type="evidence" value="ECO:0007669"/>
    <property type="project" value="UniProtKB-UniRule"/>
</dbReference>
<dbReference type="GO" id="GO:0030976">
    <property type="term" value="F:thiamine pyrophosphate binding"/>
    <property type="evidence" value="ECO:0007669"/>
    <property type="project" value="UniProtKB-UniRule"/>
</dbReference>
<dbReference type="GO" id="GO:0052865">
    <property type="term" value="P:1-deoxy-D-xylulose 5-phosphate biosynthetic process"/>
    <property type="evidence" value="ECO:0007669"/>
    <property type="project" value="UniProtKB-UniPathway"/>
</dbReference>
<dbReference type="GO" id="GO:0019288">
    <property type="term" value="P:isopentenyl diphosphate biosynthetic process, methylerythritol 4-phosphate pathway"/>
    <property type="evidence" value="ECO:0007669"/>
    <property type="project" value="TreeGrafter"/>
</dbReference>
<dbReference type="GO" id="GO:0016114">
    <property type="term" value="P:terpenoid biosynthetic process"/>
    <property type="evidence" value="ECO:0007669"/>
    <property type="project" value="UniProtKB-UniRule"/>
</dbReference>
<dbReference type="GO" id="GO:0009228">
    <property type="term" value="P:thiamine biosynthetic process"/>
    <property type="evidence" value="ECO:0007669"/>
    <property type="project" value="UniProtKB-UniRule"/>
</dbReference>
<dbReference type="CDD" id="cd02007">
    <property type="entry name" value="TPP_DXS"/>
    <property type="match status" value="1"/>
</dbReference>
<dbReference type="CDD" id="cd07033">
    <property type="entry name" value="TPP_PYR_DXS_TK_like"/>
    <property type="match status" value="1"/>
</dbReference>
<dbReference type="FunFam" id="3.40.50.920:FF:000002">
    <property type="entry name" value="1-deoxy-D-xylulose-5-phosphate synthase"/>
    <property type="match status" value="1"/>
</dbReference>
<dbReference type="FunFam" id="3.40.50.970:FF:000005">
    <property type="entry name" value="1-deoxy-D-xylulose-5-phosphate synthase"/>
    <property type="match status" value="1"/>
</dbReference>
<dbReference type="Gene3D" id="3.40.50.920">
    <property type="match status" value="1"/>
</dbReference>
<dbReference type="Gene3D" id="3.40.50.970">
    <property type="match status" value="2"/>
</dbReference>
<dbReference type="HAMAP" id="MF_00315">
    <property type="entry name" value="DXP_synth"/>
    <property type="match status" value="1"/>
</dbReference>
<dbReference type="InterPro" id="IPR005477">
    <property type="entry name" value="Dxylulose-5-P_synthase"/>
</dbReference>
<dbReference type="InterPro" id="IPR029061">
    <property type="entry name" value="THDP-binding"/>
</dbReference>
<dbReference type="InterPro" id="IPR009014">
    <property type="entry name" value="Transketo_C/PFOR_II"/>
</dbReference>
<dbReference type="InterPro" id="IPR005475">
    <property type="entry name" value="Transketolase-like_Pyr-bd"/>
</dbReference>
<dbReference type="InterPro" id="IPR020826">
    <property type="entry name" value="Transketolase_BS"/>
</dbReference>
<dbReference type="InterPro" id="IPR033248">
    <property type="entry name" value="Transketolase_C"/>
</dbReference>
<dbReference type="InterPro" id="IPR049557">
    <property type="entry name" value="Transketolase_CS"/>
</dbReference>
<dbReference type="NCBIfam" id="TIGR00204">
    <property type="entry name" value="dxs"/>
    <property type="match status" value="1"/>
</dbReference>
<dbReference type="NCBIfam" id="NF003933">
    <property type="entry name" value="PRK05444.2-2"/>
    <property type="match status" value="1"/>
</dbReference>
<dbReference type="PANTHER" id="PTHR43322">
    <property type="entry name" value="1-D-DEOXYXYLULOSE 5-PHOSPHATE SYNTHASE-RELATED"/>
    <property type="match status" value="1"/>
</dbReference>
<dbReference type="PANTHER" id="PTHR43322:SF5">
    <property type="entry name" value="1-DEOXY-D-XYLULOSE-5-PHOSPHATE SYNTHASE, CHLOROPLASTIC"/>
    <property type="match status" value="1"/>
</dbReference>
<dbReference type="Pfam" id="PF13292">
    <property type="entry name" value="DXP_synthase_N"/>
    <property type="match status" value="1"/>
</dbReference>
<dbReference type="Pfam" id="PF02779">
    <property type="entry name" value="Transket_pyr"/>
    <property type="match status" value="1"/>
</dbReference>
<dbReference type="Pfam" id="PF02780">
    <property type="entry name" value="Transketolase_C"/>
    <property type="match status" value="1"/>
</dbReference>
<dbReference type="SMART" id="SM00861">
    <property type="entry name" value="Transket_pyr"/>
    <property type="match status" value="1"/>
</dbReference>
<dbReference type="SUPFAM" id="SSF52518">
    <property type="entry name" value="Thiamin diphosphate-binding fold (THDP-binding)"/>
    <property type="match status" value="2"/>
</dbReference>
<dbReference type="SUPFAM" id="SSF52922">
    <property type="entry name" value="TK C-terminal domain-like"/>
    <property type="match status" value="1"/>
</dbReference>
<dbReference type="PROSITE" id="PS00801">
    <property type="entry name" value="TRANSKETOLASE_1"/>
    <property type="match status" value="1"/>
</dbReference>
<dbReference type="PROSITE" id="PS00802">
    <property type="entry name" value="TRANSKETOLASE_2"/>
    <property type="match status" value="1"/>
</dbReference>
<feature type="initiator methionine" description="Removed" evidence="1">
    <location>
        <position position="1"/>
    </location>
</feature>
<feature type="chain" id="PRO_0000189150" description="1-deoxy-D-xylulose-5-phosphate synthase">
    <location>
        <begin position="2"/>
        <end position="620"/>
    </location>
</feature>
<feature type="binding site" evidence="2">
    <location>
        <position position="80"/>
    </location>
    <ligand>
        <name>thiamine diphosphate</name>
        <dbReference type="ChEBI" id="CHEBI:58937"/>
    </ligand>
</feature>
<feature type="binding site" evidence="2">
    <location>
        <begin position="121"/>
        <end position="123"/>
    </location>
    <ligand>
        <name>thiamine diphosphate</name>
        <dbReference type="ChEBI" id="CHEBI:58937"/>
    </ligand>
</feature>
<feature type="binding site" evidence="2">
    <location>
        <position position="152"/>
    </location>
    <ligand>
        <name>Mg(2+)</name>
        <dbReference type="ChEBI" id="CHEBI:18420"/>
    </ligand>
</feature>
<feature type="binding site" evidence="2">
    <location>
        <begin position="153"/>
        <end position="154"/>
    </location>
    <ligand>
        <name>thiamine diphosphate</name>
        <dbReference type="ChEBI" id="CHEBI:58937"/>
    </ligand>
</feature>
<feature type="binding site" evidence="2">
    <location>
        <position position="181"/>
    </location>
    <ligand>
        <name>Mg(2+)</name>
        <dbReference type="ChEBI" id="CHEBI:18420"/>
    </ligand>
</feature>
<feature type="binding site" evidence="2">
    <location>
        <position position="181"/>
    </location>
    <ligand>
        <name>thiamine diphosphate</name>
        <dbReference type="ChEBI" id="CHEBI:58937"/>
    </ligand>
</feature>
<feature type="binding site" evidence="2">
    <location>
        <position position="288"/>
    </location>
    <ligand>
        <name>thiamine diphosphate</name>
        <dbReference type="ChEBI" id="CHEBI:58937"/>
    </ligand>
</feature>
<feature type="binding site" evidence="2">
    <location>
        <position position="370"/>
    </location>
    <ligand>
        <name>thiamine diphosphate</name>
        <dbReference type="ChEBI" id="CHEBI:58937"/>
    </ligand>
</feature>
<accession>Q8Z8X3</accession>